<protein>
    <recommendedName>
        <fullName evidence="1">Photosystem II CP47 reaction center protein</fullName>
    </recommendedName>
    <alternativeName>
        <fullName evidence="1">PSII 47 kDa protein</fullName>
    </alternativeName>
    <alternativeName>
        <fullName evidence="1">Protein CP-47</fullName>
    </alternativeName>
</protein>
<evidence type="ECO:0000255" key="1">
    <source>
        <dbReference type="HAMAP-Rule" id="MF_01495"/>
    </source>
</evidence>
<organism>
    <name type="scientific">Eucalyptus globulus subsp. globulus</name>
    <name type="common">Tasmanian blue gum</name>
    <dbReference type="NCBI Taxonomy" id="71271"/>
    <lineage>
        <taxon>Eukaryota</taxon>
        <taxon>Viridiplantae</taxon>
        <taxon>Streptophyta</taxon>
        <taxon>Embryophyta</taxon>
        <taxon>Tracheophyta</taxon>
        <taxon>Spermatophyta</taxon>
        <taxon>Magnoliopsida</taxon>
        <taxon>eudicotyledons</taxon>
        <taxon>Gunneridae</taxon>
        <taxon>Pentapetalae</taxon>
        <taxon>rosids</taxon>
        <taxon>malvids</taxon>
        <taxon>Myrtales</taxon>
        <taxon>Myrtaceae</taxon>
        <taxon>Myrtoideae</taxon>
        <taxon>Eucalypteae</taxon>
        <taxon>Eucalyptus</taxon>
    </lineage>
</organism>
<gene>
    <name evidence="1" type="primary">psbB</name>
</gene>
<feature type="chain" id="PRO_0000359822" description="Photosystem II CP47 reaction center protein">
    <location>
        <begin position="1"/>
        <end position="508"/>
    </location>
</feature>
<feature type="transmembrane region" description="Helical" evidence="1">
    <location>
        <begin position="21"/>
        <end position="36"/>
    </location>
</feature>
<feature type="transmembrane region" description="Helical" evidence="1">
    <location>
        <begin position="101"/>
        <end position="115"/>
    </location>
</feature>
<feature type="transmembrane region" description="Helical" evidence="1">
    <location>
        <begin position="140"/>
        <end position="156"/>
    </location>
</feature>
<feature type="transmembrane region" description="Helical" evidence="1">
    <location>
        <begin position="203"/>
        <end position="218"/>
    </location>
</feature>
<feature type="transmembrane region" description="Helical" evidence="1">
    <location>
        <begin position="237"/>
        <end position="252"/>
    </location>
</feature>
<feature type="transmembrane region" description="Helical" evidence="1">
    <location>
        <begin position="457"/>
        <end position="472"/>
    </location>
</feature>
<dbReference type="EMBL" id="AY780259">
    <property type="protein sequence ID" value="AAX21053.1"/>
    <property type="molecule type" value="Genomic_DNA"/>
</dbReference>
<dbReference type="RefSeq" id="YP_636325.1">
    <property type="nucleotide sequence ID" value="NC_008115.1"/>
</dbReference>
<dbReference type="SMR" id="Q49KX2"/>
<dbReference type="GeneID" id="4108409"/>
<dbReference type="GO" id="GO:0009535">
    <property type="term" value="C:chloroplast thylakoid membrane"/>
    <property type="evidence" value="ECO:0007669"/>
    <property type="project" value="UniProtKB-SubCell"/>
</dbReference>
<dbReference type="GO" id="GO:0009523">
    <property type="term" value="C:photosystem II"/>
    <property type="evidence" value="ECO:0007669"/>
    <property type="project" value="UniProtKB-KW"/>
</dbReference>
<dbReference type="GO" id="GO:0016168">
    <property type="term" value="F:chlorophyll binding"/>
    <property type="evidence" value="ECO:0007669"/>
    <property type="project" value="UniProtKB-UniRule"/>
</dbReference>
<dbReference type="GO" id="GO:0045156">
    <property type="term" value="F:electron transporter, transferring electrons within the cyclic electron transport pathway of photosynthesis activity"/>
    <property type="evidence" value="ECO:0007669"/>
    <property type="project" value="InterPro"/>
</dbReference>
<dbReference type="GO" id="GO:0009772">
    <property type="term" value="P:photosynthetic electron transport in photosystem II"/>
    <property type="evidence" value="ECO:0007669"/>
    <property type="project" value="InterPro"/>
</dbReference>
<dbReference type="FunFam" id="3.10.680.10:FF:000001">
    <property type="entry name" value="Photosystem II CP47 reaction center protein"/>
    <property type="match status" value="1"/>
</dbReference>
<dbReference type="Gene3D" id="3.10.680.10">
    <property type="entry name" value="Photosystem II CP47 reaction center protein"/>
    <property type="match status" value="1"/>
</dbReference>
<dbReference type="HAMAP" id="MF_01495">
    <property type="entry name" value="PSII_PsbB_CP47"/>
    <property type="match status" value="1"/>
</dbReference>
<dbReference type="InterPro" id="IPR000932">
    <property type="entry name" value="PS_antenna-like"/>
</dbReference>
<dbReference type="InterPro" id="IPR036001">
    <property type="entry name" value="PS_II_antenna-like_sf"/>
</dbReference>
<dbReference type="InterPro" id="IPR017486">
    <property type="entry name" value="PSII_PsbB"/>
</dbReference>
<dbReference type="NCBIfam" id="TIGR03039">
    <property type="entry name" value="PS_II_CP47"/>
    <property type="match status" value="1"/>
</dbReference>
<dbReference type="PANTHER" id="PTHR33180">
    <property type="entry name" value="PHOTOSYSTEM II CP43 REACTION CENTER PROTEIN"/>
    <property type="match status" value="1"/>
</dbReference>
<dbReference type="PANTHER" id="PTHR33180:SF35">
    <property type="entry name" value="PHOTOSYSTEM II CP47 REACTION CENTER PROTEIN"/>
    <property type="match status" value="1"/>
</dbReference>
<dbReference type="Pfam" id="PF00421">
    <property type="entry name" value="PSII"/>
    <property type="match status" value="1"/>
</dbReference>
<dbReference type="SUPFAM" id="SSF161077">
    <property type="entry name" value="Photosystem II antenna protein-like"/>
    <property type="match status" value="1"/>
</dbReference>
<geneLocation type="chloroplast"/>
<comment type="function">
    <text evidence="1">One of the components of the core complex of photosystem II (PSII). It binds chlorophyll and helps catalyze the primary light-induced photochemical processes of PSII. PSII is a light-driven water:plastoquinone oxidoreductase, using light energy to abstract electrons from H(2)O, generating O(2) and a proton gradient subsequently used for ATP formation.</text>
</comment>
<comment type="cofactor">
    <text evidence="1">Binds multiple chlorophylls. PSII binds additional chlorophylls, carotenoids and specific lipids.</text>
</comment>
<comment type="subunit">
    <text evidence="1">PSII is composed of 1 copy each of membrane proteins PsbA, PsbB, PsbC, PsbD, PsbE, PsbF, PsbH, PsbI, PsbJ, PsbK, PsbL, PsbM, PsbT, PsbX, PsbY, PsbZ, Psb30/Ycf12, at least 3 peripheral proteins of the oxygen-evolving complex and a large number of cofactors. It forms dimeric complexes.</text>
</comment>
<comment type="subcellular location">
    <subcellularLocation>
        <location evidence="1">Plastid</location>
        <location evidence="1">Chloroplast thylakoid membrane</location>
        <topology evidence="1">Multi-pass membrane protein</topology>
    </subcellularLocation>
</comment>
<comment type="similarity">
    <text evidence="1">Belongs to the PsbB/PsbC family. PsbB subfamily.</text>
</comment>
<name>PSBB_EUCGG</name>
<proteinExistence type="inferred from homology"/>
<sequence length="508" mass="56082">MGLPWYRVHTVVLNDPGRLLSVHIMHTALVAGWAGSMALYELAVFDPSDPVLDPMWRQGMFVIPFMTRLGITNSWGGWSITGGTITNPGIWSYEGVAGAHIVFSGLCFLAAIWHWVYWDLEIFCDERTGKPSLDLPKIFGIHLFLSGVACFGFGAFHVTGLYGPGIWVSDPYGLTGKVQPVNPAWGVEGFDPFVPGGIASHHIAAGTLGILAGLFHLSVRPPQRLYKGLRMGNIETVLSSSIAAVFFAAFVVAGTMWYGSATTPIELFGPTRYQWDQGYFQQEIYRRVGAGLAKNQSLSEAWSKIPEKLAFYDYIGNNPAKGGLFRAGSMDNGDGIAVGWLGHPIFRDKEGRELFVRRMPTFFETFPVVLVDGDGIVRADVPFRRAESKYSVEQVGVTVEFYGGELNGVSYSDPATVKKYARRAQLGEIFELDRATLKSDGVFRSSPRGWFTFGHASFALLFFFGHIWHGARTLFRDVFAGIDPDLDAQVEFGAFQKLGDPTTRRQVV</sequence>
<accession>Q49KX2</accession>
<keyword id="KW-0148">Chlorophyll</keyword>
<keyword id="KW-0150">Chloroplast</keyword>
<keyword id="KW-0157">Chromophore</keyword>
<keyword id="KW-0472">Membrane</keyword>
<keyword id="KW-0602">Photosynthesis</keyword>
<keyword id="KW-0604">Photosystem II</keyword>
<keyword id="KW-0934">Plastid</keyword>
<keyword id="KW-0793">Thylakoid</keyword>
<keyword id="KW-0812">Transmembrane</keyword>
<keyword id="KW-1133">Transmembrane helix</keyword>
<reference key="1">
    <citation type="journal article" date="2005" name="DNA Res.">
        <title>Complete nucleotide sequence of the chloroplast genome from the Tasmanian blue gum, Eucalyptus globulus (Myrtaceae).</title>
        <authorList>
            <person name="Steane D.A."/>
        </authorList>
    </citation>
    <scope>NUCLEOTIDE SEQUENCE [LARGE SCALE GENOMIC DNA]</scope>
</reference>